<feature type="chain" id="PRO_1000054208" description="GTP 3',8-cyclase">
    <location>
        <begin position="1"/>
        <end position="343"/>
    </location>
</feature>
<feature type="domain" description="Radical SAM core" evidence="2">
    <location>
        <begin position="19"/>
        <end position="244"/>
    </location>
</feature>
<feature type="binding site" evidence="1">
    <location>
        <position position="28"/>
    </location>
    <ligand>
        <name>GTP</name>
        <dbReference type="ChEBI" id="CHEBI:37565"/>
    </ligand>
</feature>
<feature type="binding site" evidence="1">
    <location>
        <position position="35"/>
    </location>
    <ligand>
        <name>[4Fe-4S] cluster</name>
        <dbReference type="ChEBI" id="CHEBI:49883"/>
        <label>1</label>
        <note>4Fe-4S-S-AdoMet</note>
    </ligand>
</feature>
<feature type="binding site" evidence="1">
    <location>
        <position position="39"/>
    </location>
    <ligand>
        <name>[4Fe-4S] cluster</name>
        <dbReference type="ChEBI" id="CHEBI:49883"/>
        <label>1</label>
        <note>4Fe-4S-S-AdoMet</note>
    </ligand>
</feature>
<feature type="binding site" evidence="1">
    <location>
        <position position="41"/>
    </location>
    <ligand>
        <name>S-adenosyl-L-methionine</name>
        <dbReference type="ChEBI" id="CHEBI:59789"/>
    </ligand>
</feature>
<feature type="binding site" evidence="1">
    <location>
        <position position="42"/>
    </location>
    <ligand>
        <name>[4Fe-4S] cluster</name>
        <dbReference type="ChEBI" id="CHEBI:49883"/>
        <label>1</label>
        <note>4Fe-4S-S-AdoMet</note>
    </ligand>
</feature>
<feature type="binding site" evidence="1">
    <location>
        <position position="77"/>
    </location>
    <ligand>
        <name>GTP</name>
        <dbReference type="ChEBI" id="CHEBI:37565"/>
    </ligand>
</feature>
<feature type="binding site" evidence="1">
    <location>
        <position position="81"/>
    </location>
    <ligand>
        <name>S-adenosyl-L-methionine</name>
        <dbReference type="ChEBI" id="CHEBI:59789"/>
    </ligand>
</feature>
<feature type="binding site" evidence="1">
    <location>
        <position position="111"/>
    </location>
    <ligand>
        <name>GTP</name>
        <dbReference type="ChEBI" id="CHEBI:37565"/>
    </ligand>
</feature>
<feature type="binding site" evidence="1">
    <location>
        <position position="135"/>
    </location>
    <ligand>
        <name>S-adenosyl-L-methionine</name>
        <dbReference type="ChEBI" id="CHEBI:59789"/>
    </ligand>
</feature>
<feature type="binding site" evidence="1">
    <location>
        <position position="171"/>
    </location>
    <ligand>
        <name>GTP</name>
        <dbReference type="ChEBI" id="CHEBI:37565"/>
    </ligand>
</feature>
<feature type="binding site" evidence="1">
    <location>
        <position position="205"/>
    </location>
    <ligand>
        <name>S-adenosyl-L-methionine</name>
        <dbReference type="ChEBI" id="CHEBI:59789"/>
    </ligand>
</feature>
<feature type="binding site" evidence="1">
    <location>
        <position position="268"/>
    </location>
    <ligand>
        <name>[4Fe-4S] cluster</name>
        <dbReference type="ChEBI" id="CHEBI:49883"/>
        <label>2</label>
        <note>4Fe-4S-substrate</note>
    </ligand>
</feature>
<feature type="binding site" evidence="1">
    <location>
        <position position="271"/>
    </location>
    <ligand>
        <name>[4Fe-4S] cluster</name>
        <dbReference type="ChEBI" id="CHEBI:49883"/>
        <label>2</label>
        <note>4Fe-4S-substrate</note>
    </ligand>
</feature>
<feature type="binding site" evidence="1">
    <location>
        <begin position="273"/>
        <end position="275"/>
    </location>
    <ligand>
        <name>GTP</name>
        <dbReference type="ChEBI" id="CHEBI:37565"/>
    </ligand>
</feature>
<feature type="binding site" evidence="1">
    <location>
        <position position="285"/>
    </location>
    <ligand>
        <name>[4Fe-4S] cluster</name>
        <dbReference type="ChEBI" id="CHEBI:49883"/>
        <label>2</label>
        <note>4Fe-4S-substrate</note>
    </ligand>
</feature>
<evidence type="ECO:0000255" key="1">
    <source>
        <dbReference type="HAMAP-Rule" id="MF_01225"/>
    </source>
</evidence>
<evidence type="ECO:0000255" key="2">
    <source>
        <dbReference type="PROSITE-ProRule" id="PRU01266"/>
    </source>
</evidence>
<accession>Q3STB0</accession>
<name>MOAA_NITWN</name>
<proteinExistence type="inferred from homology"/>
<dbReference type="EC" id="4.1.99.22" evidence="1"/>
<dbReference type="EMBL" id="CP000115">
    <property type="protein sequence ID" value="ABA04481.1"/>
    <property type="molecule type" value="Genomic_DNA"/>
</dbReference>
<dbReference type="RefSeq" id="WP_011314510.1">
    <property type="nucleotide sequence ID" value="NC_007406.1"/>
</dbReference>
<dbReference type="SMR" id="Q3STB0"/>
<dbReference type="STRING" id="323098.Nwi_1219"/>
<dbReference type="KEGG" id="nwi:Nwi_1219"/>
<dbReference type="eggNOG" id="COG2896">
    <property type="taxonomic scope" value="Bacteria"/>
</dbReference>
<dbReference type="HOGENOM" id="CLU_009273_0_1_5"/>
<dbReference type="OrthoDB" id="9763993at2"/>
<dbReference type="UniPathway" id="UPA00344"/>
<dbReference type="Proteomes" id="UP000002531">
    <property type="component" value="Chromosome"/>
</dbReference>
<dbReference type="GO" id="GO:0051539">
    <property type="term" value="F:4 iron, 4 sulfur cluster binding"/>
    <property type="evidence" value="ECO:0007669"/>
    <property type="project" value="UniProtKB-UniRule"/>
</dbReference>
<dbReference type="GO" id="GO:0061799">
    <property type="term" value="F:cyclic pyranopterin monophosphate synthase activity"/>
    <property type="evidence" value="ECO:0007669"/>
    <property type="project" value="TreeGrafter"/>
</dbReference>
<dbReference type="GO" id="GO:0061798">
    <property type="term" value="F:GTP 3',8'-cyclase activity"/>
    <property type="evidence" value="ECO:0007669"/>
    <property type="project" value="UniProtKB-UniRule"/>
</dbReference>
<dbReference type="GO" id="GO:0005525">
    <property type="term" value="F:GTP binding"/>
    <property type="evidence" value="ECO:0007669"/>
    <property type="project" value="UniProtKB-UniRule"/>
</dbReference>
<dbReference type="GO" id="GO:0046872">
    <property type="term" value="F:metal ion binding"/>
    <property type="evidence" value="ECO:0007669"/>
    <property type="project" value="UniProtKB-KW"/>
</dbReference>
<dbReference type="GO" id="GO:1904047">
    <property type="term" value="F:S-adenosyl-L-methionine binding"/>
    <property type="evidence" value="ECO:0007669"/>
    <property type="project" value="UniProtKB-UniRule"/>
</dbReference>
<dbReference type="GO" id="GO:0006777">
    <property type="term" value="P:Mo-molybdopterin cofactor biosynthetic process"/>
    <property type="evidence" value="ECO:0007669"/>
    <property type="project" value="UniProtKB-UniRule"/>
</dbReference>
<dbReference type="CDD" id="cd01335">
    <property type="entry name" value="Radical_SAM"/>
    <property type="match status" value="1"/>
</dbReference>
<dbReference type="CDD" id="cd21117">
    <property type="entry name" value="Twitch_MoaA"/>
    <property type="match status" value="1"/>
</dbReference>
<dbReference type="Gene3D" id="3.20.20.70">
    <property type="entry name" value="Aldolase class I"/>
    <property type="match status" value="1"/>
</dbReference>
<dbReference type="HAMAP" id="MF_01225_B">
    <property type="entry name" value="MoaA_B"/>
    <property type="match status" value="1"/>
</dbReference>
<dbReference type="InterPro" id="IPR013785">
    <property type="entry name" value="Aldolase_TIM"/>
</dbReference>
<dbReference type="InterPro" id="IPR006638">
    <property type="entry name" value="Elp3/MiaA/NifB-like_rSAM"/>
</dbReference>
<dbReference type="InterPro" id="IPR013483">
    <property type="entry name" value="MoaA"/>
</dbReference>
<dbReference type="InterPro" id="IPR000385">
    <property type="entry name" value="MoaA_NifB_PqqE_Fe-S-bd_CS"/>
</dbReference>
<dbReference type="InterPro" id="IPR010505">
    <property type="entry name" value="MoaA_twitch"/>
</dbReference>
<dbReference type="InterPro" id="IPR050105">
    <property type="entry name" value="MoCo_biosynth_MoaA/MoaC"/>
</dbReference>
<dbReference type="InterPro" id="IPR007197">
    <property type="entry name" value="rSAM"/>
</dbReference>
<dbReference type="NCBIfam" id="TIGR02666">
    <property type="entry name" value="moaA"/>
    <property type="match status" value="1"/>
</dbReference>
<dbReference type="PANTHER" id="PTHR22960:SF0">
    <property type="entry name" value="MOLYBDENUM COFACTOR BIOSYNTHESIS PROTEIN 1"/>
    <property type="match status" value="1"/>
</dbReference>
<dbReference type="PANTHER" id="PTHR22960">
    <property type="entry name" value="MOLYBDOPTERIN COFACTOR SYNTHESIS PROTEIN A"/>
    <property type="match status" value="1"/>
</dbReference>
<dbReference type="Pfam" id="PF13353">
    <property type="entry name" value="Fer4_12"/>
    <property type="match status" value="1"/>
</dbReference>
<dbReference type="Pfam" id="PF06463">
    <property type="entry name" value="Mob_synth_C"/>
    <property type="match status" value="1"/>
</dbReference>
<dbReference type="Pfam" id="PF04055">
    <property type="entry name" value="Radical_SAM"/>
    <property type="match status" value="1"/>
</dbReference>
<dbReference type="SFLD" id="SFLDG01383">
    <property type="entry name" value="cyclic_pyranopterin_phosphate"/>
    <property type="match status" value="1"/>
</dbReference>
<dbReference type="SFLD" id="SFLDS00029">
    <property type="entry name" value="Radical_SAM"/>
    <property type="match status" value="1"/>
</dbReference>
<dbReference type="SMART" id="SM00729">
    <property type="entry name" value="Elp3"/>
    <property type="match status" value="1"/>
</dbReference>
<dbReference type="SUPFAM" id="SSF102114">
    <property type="entry name" value="Radical SAM enzymes"/>
    <property type="match status" value="1"/>
</dbReference>
<dbReference type="PROSITE" id="PS01305">
    <property type="entry name" value="MOAA_NIFB_PQQE"/>
    <property type="match status" value="1"/>
</dbReference>
<dbReference type="PROSITE" id="PS51918">
    <property type="entry name" value="RADICAL_SAM"/>
    <property type="match status" value="1"/>
</dbReference>
<protein>
    <recommendedName>
        <fullName evidence="1">GTP 3',8-cyclase</fullName>
        <ecNumber evidence="1">4.1.99.22</ecNumber>
    </recommendedName>
    <alternativeName>
        <fullName evidence="1">Molybdenum cofactor biosynthesis protein A</fullName>
    </alternativeName>
</protein>
<sequence>MTGCSAPAETSGSRKMVDPFGRNISYLRVSVTDRCDLRCFYCMSEDMTFLPKADLLTLEELDRLCSAFIAKGVRKLRLTGGEPLVRRNVMSLIRSLSRHLQSGALKELTLTTNGSQLVRFANELKDCGVKRINVSLDTLDPARFREITRWGDIQKVMAGIDAAQAAGLAVKINAVALKNLNEDEIPSLMEWAHSRDMALTLIEVMPMGDIGASRADQYLPLSMLRARLEGQYTLTDLDDSTGGPARYVRVSETGGKLGFITPMTHNFCESCNRVRITCTGTLHTCLGHEDASDLRRPLRASPTDELLYETIDRAIGLKPKGHDFIIDRHNRPSVSRHMSVTGG</sequence>
<reference key="1">
    <citation type="journal article" date="2006" name="Appl. Environ. Microbiol.">
        <title>Genome sequence of the chemolithoautotrophic nitrite-oxidizing bacterium Nitrobacter winogradskyi Nb-255.</title>
        <authorList>
            <person name="Starkenburg S.R."/>
            <person name="Chain P.S.G."/>
            <person name="Sayavedra-Soto L.A."/>
            <person name="Hauser L."/>
            <person name="Land M.L."/>
            <person name="Larimer F.W."/>
            <person name="Malfatti S.A."/>
            <person name="Klotz M.G."/>
            <person name="Bottomley P.J."/>
            <person name="Arp D.J."/>
            <person name="Hickey W.J."/>
        </authorList>
    </citation>
    <scope>NUCLEOTIDE SEQUENCE [LARGE SCALE GENOMIC DNA]</scope>
    <source>
        <strain>ATCC 25391 / DSM 10237 / CIP 104748 / NCIMB 11846 / Nb-255</strain>
    </source>
</reference>
<keyword id="KW-0004">4Fe-4S</keyword>
<keyword id="KW-0342">GTP-binding</keyword>
<keyword id="KW-0408">Iron</keyword>
<keyword id="KW-0411">Iron-sulfur</keyword>
<keyword id="KW-0456">Lyase</keyword>
<keyword id="KW-0479">Metal-binding</keyword>
<keyword id="KW-0501">Molybdenum cofactor biosynthesis</keyword>
<keyword id="KW-0547">Nucleotide-binding</keyword>
<keyword id="KW-1185">Reference proteome</keyword>
<keyword id="KW-0949">S-adenosyl-L-methionine</keyword>
<organism>
    <name type="scientific">Nitrobacter winogradskyi (strain ATCC 25391 / DSM 10237 / CIP 104748 / NCIMB 11846 / Nb-255)</name>
    <dbReference type="NCBI Taxonomy" id="323098"/>
    <lineage>
        <taxon>Bacteria</taxon>
        <taxon>Pseudomonadati</taxon>
        <taxon>Pseudomonadota</taxon>
        <taxon>Alphaproteobacteria</taxon>
        <taxon>Hyphomicrobiales</taxon>
        <taxon>Nitrobacteraceae</taxon>
        <taxon>Nitrobacter</taxon>
    </lineage>
</organism>
<comment type="function">
    <text evidence="1">Catalyzes the cyclization of GTP to (8S)-3',8-cyclo-7,8-dihydroguanosine 5'-triphosphate.</text>
</comment>
<comment type="catalytic activity">
    <reaction evidence="1">
        <text>GTP + AH2 + S-adenosyl-L-methionine = (8S)-3',8-cyclo-7,8-dihydroguanosine 5'-triphosphate + 5'-deoxyadenosine + L-methionine + A + H(+)</text>
        <dbReference type="Rhea" id="RHEA:49576"/>
        <dbReference type="ChEBI" id="CHEBI:13193"/>
        <dbReference type="ChEBI" id="CHEBI:15378"/>
        <dbReference type="ChEBI" id="CHEBI:17319"/>
        <dbReference type="ChEBI" id="CHEBI:17499"/>
        <dbReference type="ChEBI" id="CHEBI:37565"/>
        <dbReference type="ChEBI" id="CHEBI:57844"/>
        <dbReference type="ChEBI" id="CHEBI:59789"/>
        <dbReference type="ChEBI" id="CHEBI:131766"/>
        <dbReference type="EC" id="4.1.99.22"/>
    </reaction>
</comment>
<comment type="cofactor">
    <cofactor evidence="1">
        <name>[4Fe-4S] cluster</name>
        <dbReference type="ChEBI" id="CHEBI:49883"/>
    </cofactor>
    <text evidence="1">Binds 2 [4Fe-4S] clusters. Binds 1 [4Fe-4S] cluster coordinated with 3 cysteines and an exchangeable S-adenosyl-L-methionine and 1 [4Fe-4S] cluster coordinated with 3 cysteines and the GTP-derived substrate.</text>
</comment>
<comment type="pathway">
    <text evidence="1">Cofactor biosynthesis; molybdopterin biosynthesis.</text>
</comment>
<comment type="subunit">
    <text evidence="1">Monomer and homodimer.</text>
</comment>
<comment type="similarity">
    <text evidence="1">Belongs to the radical SAM superfamily. MoaA family.</text>
</comment>
<gene>
    <name evidence="1" type="primary">moaA</name>
    <name type="ordered locus">Nwi_1219</name>
</gene>